<comment type="function">
    <text evidence="1">Probable inactive acireductone dioxygenase.</text>
</comment>
<comment type="subcellular location">
    <subcellularLocation>
        <location evidence="1">Cytoplasm</location>
    </subcellularLocation>
    <subcellularLocation>
        <location evidence="1">Nucleus</location>
    </subcellularLocation>
</comment>
<comment type="similarity">
    <text evidence="1">Belongs to the acireductone dioxygenase (ARD) family.</text>
</comment>
<comment type="caution">
    <text evidence="2">This enzyme lacks one or more conserved metal-binding sites. It may be non-functional.</text>
</comment>
<proteinExistence type="inferred from homology"/>
<gene>
    <name type="ORF">K07E1.1</name>
</gene>
<accession>Q09407</accession>
<feature type="chain" id="PRO_0000414336" description="Probable inactive acireductone dioxygenase 2">
    <location>
        <begin position="1"/>
        <end position="158"/>
    </location>
</feature>
<name>MTND2_CAEEL</name>
<reference key="1">
    <citation type="journal article" date="1998" name="Science">
        <title>Genome sequence of the nematode C. elegans: a platform for investigating biology.</title>
        <authorList>
            <consortium name="The C. elegans sequencing consortium"/>
        </authorList>
    </citation>
    <scope>NUCLEOTIDE SEQUENCE [LARGE SCALE GENOMIC DNA]</scope>
    <source>
        <strain>Bristol N2</strain>
    </source>
</reference>
<sequence>MVQIWQMEPYPCGDPRLPHHLFPPKKITPDELSKRTGTLYWKLDTLDQVALAKRLTTLKLEHSFKKEDIFTLDAETTANFDDKIEELFEESSVPFEQARMIIEGTAYYDVEDKNGQWVRIFCEYGDLILIPANTCFRFTTTPHNFVKMRRFYKDEDSE</sequence>
<evidence type="ECO:0000255" key="1">
    <source>
        <dbReference type="HAMAP-Rule" id="MF_03154"/>
    </source>
</evidence>
<evidence type="ECO:0000305" key="2"/>
<dbReference type="EMBL" id="FO080974">
    <property type="protein sequence ID" value="CCD68221.1"/>
    <property type="molecule type" value="Genomic_DNA"/>
</dbReference>
<dbReference type="PIR" id="T16578">
    <property type="entry name" value="T16578"/>
</dbReference>
<dbReference type="RefSeq" id="NP_494804.2">
    <property type="nucleotide sequence ID" value="NM_062403.6"/>
</dbReference>
<dbReference type="SMR" id="Q09407"/>
<dbReference type="BioGRID" id="2548097">
    <property type="interactions" value="2"/>
</dbReference>
<dbReference type="DIP" id="DIP-27188N"/>
<dbReference type="FunCoup" id="Q09407">
    <property type="interactions" value="40"/>
</dbReference>
<dbReference type="STRING" id="6239.K07E1.1.2"/>
<dbReference type="PaxDb" id="6239-K07E1.1"/>
<dbReference type="PeptideAtlas" id="Q09407"/>
<dbReference type="EnsemblMetazoa" id="K07E1.1.1">
    <property type="protein sequence ID" value="K07E1.1.1"/>
    <property type="gene ID" value="WBGene00019489"/>
</dbReference>
<dbReference type="GeneID" id="24104726"/>
<dbReference type="KEGG" id="cel:CELE_K07E1.1"/>
<dbReference type="UCSC" id="K07E1.1">
    <property type="organism name" value="c. elegans"/>
</dbReference>
<dbReference type="AGR" id="WB:WBGene00019489"/>
<dbReference type="CTD" id="24104726"/>
<dbReference type="WormBase" id="K07E1.1">
    <property type="protein sequence ID" value="CE39745"/>
    <property type="gene ID" value="WBGene00019489"/>
</dbReference>
<dbReference type="eggNOG" id="KOG2107">
    <property type="taxonomic scope" value="Eukaryota"/>
</dbReference>
<dbReference type="GeneTree" id="ENSGT00390000008195"/>
<dbReference type="HOGENOM" id="CLU_090154_2_0_1"/>
<dbReference type="InParanoid" id="Q09407"/>
<dbReference type="OMA" id="WVRILCE"/>
<dbReference type="OrthoDB" id="1867259at2759"/>
<dbReference type="PhylomeDB" id="Q09407"/>
<dbReference type="PRO" id="PR:Q09407"/>
<dbReference type="Proteomes" id="UP000001940">
    <property type="component" value="Chromosome II"/>
</dbReference>
<dbReference type="Bgee" id="WBGene00019489">
    <property type="expression patterns" value="Expressed in larva and 2 other cell types or tissues"/>
</dbReference>
<dbReference type="GO" id="GO:0005737">
    <property type="term" value="C:cytoplasm"/>
    <property type="evidence" value="ECO:0007669"/>
    <property type="project" value="UniProtKB-SubCell"/>
</dbReference>
<dbReference type="GO" id="GO:0005634">
    <property type="term" value="C:nucleus"/>
    <property type="evidence" value="ECO:0007669"/>
    <property type="project" value="UniProtKB-SubCell"/>
</dbReference>
<dbReference type="GO" id="GO:0010309">
    <property type="term" value="F:acireductone dioxygenase [iron(II)-requiring] activity"/>
    <property type="evidence" value="ECO:0000318"/>
    <property type="project" value="GO_Central"/>
</dbReference>
<dbReference type="GO" id="GO:0019509">
    <property type="term" value="P:L-methionine salvage from methylthioadenosine"/>
    <property type="evidence" value="ECO:0007669"/>
    <property type="project" value="InterPro"/>
</dbReference>
<dbReference type="GO" id="GO:0006555">
    <property type="term" value="P:methionine metabolic process"/>
    <property type="evidence" value="ECO:0000318"/>
    <property type="project" value="GO_Central"/>
</dbReference>
<dbReference type="CDD" id="cd02232">
    <property type="entry name" value="cupin_ARD"/>
    <property type="match status" value="1"/>
</dbReference>
<dbReference type="FunFam" id="2.60.120.10:FF:000149">
    <property type="entry name" value="1,2-dihydroxy-3-keto-5-methylthiopentene dioxygenase homolog"/>
    <property type="match status" value="1"/>
</dbReference>
<dbReference type="Gene3D" id="2.60.120.10">
    <property type="entry name" value="Jelly Rolls"/>
    <property type="match status" value="1"/>
</dbReference>
<dbReference type="HAMAP" id="MF_03154">
    <property type="entry name" value="Salvage_MtnD_euk"/>
    <property type="match status" value="1"/>
</dbReference>
<dbReference type="InterPro" id="IPR004313">
    <property type="entry name" value="ARD"/>
</dbReference>
<dbReference type="InterPro" id="IPR027496">
    <property type="entry name" value="ARD_euk"/>
</dbReference>
<dbReference type="InterPro" id="IPR014710">
    <property type="entry name" value="RmlC-like_jellyroll"/>
</dbReference>
<dbReference type="InterPro" id="IPR011051">
    <property type="entry name" value="RmlC_Cupin_sf"/>
</dbReference>
<dbReference type="PANTHER" id="PTHR23418">
    <property type="entry name" value="ACIREDUCTONE DIOXYGENASE"/>
    <property type="match status" value="1"/>
</dbReference>
<dbReference type="PANTHER" id="PTHR23418:SF1">
    <property type="entry name" value="INACTIVE ACIREDUCTONE DIOXYGENASE 2-RELATED"/>
    <property type="match status" value="1"/>
</dbReference>
<dbReference type="Pfam" id="PF03079">
    <property type="entry name" value="ARD"/>
    <property type="match status" value="1"/>
</dbReference>
<dbReference type="SUPFAM" id="SSF51182">
    <property type="entry name" value="RmlC-like cupins"/>
    <property type="match status" value="1"/>
</dbReference>
<protein>
    <recommendedName>
        <fullName evidence="1">Probable inactive acireductone dioxygenase 2</fullName>
    </recommendedName>
</protein>
<keyword id="KW-0963">Cytoplasm</keyword>
<keyword id="KW-0539">Nucleus</keyword>
<keyword id="KW-1185">Reference proteome</keyword>
<organism>
    <name type="scientific">Caenorhabditis elegans</name>
    <dbReference type="NCBI Taxonomy" id="6239"/>
    <lineage>
        <taxon>Eukaryota</taxon>
        <taxon>Metazoa</taxon>
        <taxon>Ecdysozoa</taxon>
        <taxon>Nematoda</taxon>
        <taxon>Chromadorea</taxon>
        <taxon>Rhabditida</taxon>
        <taxon>Rhabditina</taxon>
        <taxon>Rhabditomorpha</taxon>
        <taxon>Rhabditoidea</taxon>
        <taxon>Rhabditidae</taxon>
        <taxon>Peloderinae</taxon>
        <taxon>Caenorhabditis</taxon>
    </lineage>
</organism>